<keyword id="KW-0460">Magnesium</keyword>
<keyword id="KW-0479">Metal-binding</keyword>
<keyword id="KW-0784">Thiamine biosynthesis</keyword>
<keyword id="KW-0808">Transferase</keyword>
<sequence length="215" mass="23275">MATPGFPSTEQRLGLYPVVDSLLWIERLLAAGVTTLQLRIKNADDAQVEQDIVAAIELGKRYQARLFINDYWQLAVKHGAYGVHLGQEDLEAADLAAIQQAGLRLGISTHDEHELAVAKTLRPSYIALGHIFPTQTKQMPSSPQGLASLSRQVKNTPDYPTVAIGGISIERVPHVLATGVGSVAVVSAITLASDWQRATAQLLHLIEGKELADEK</sequence>
<protein>
    <recommendedName>
        <fullName evidence="1">Thiamine-phosphate synthase</fullName>
        <shortName evidence="1">TP synthase</shortName>
        <shortName evidence="1">TPS</shortName>
        <ecNumber evidence="1">2.5.1.3</ecNumber>
    </recommendedName>
    <alternativeName>
        <fullName evidence="1">Thiamine-phosphate pyrophosphorylase</fullName>
        <shortName evidence="1">TMP pyrophosphorylase</shortName>
        <shortName evidence="1">TMP-PPase</shortName>
    </alternativeName>
</protein>
<proteinExistence type="inferred from homology"/>
<evidence type="ECO:0000255" key="1">
    <source>
        <dbReference type="HAMAP-Rule" id="MF_00097"/>
    </source>
</evidence>
<evidence type="ECO:0000305" key="2"/>
<comment type="function">
    <text evidence="1">Condenses 4-methyl-5-(beta-hydroxyethyl)thiazole monophosphate (THZ-P) and 2-methyl-4-amino-5-hydroxymethyl pyrimidine pyrophosphate (HMP-PP) to form thiamine monophosphate (TMP).</text>
</comment>
<comment type="catalytic activity">
    <reaction evidence="1">
        <text>2-[(2R,5Z)-2-carboxy-4-methylthiazol-5(2H)-ylidene]ethyl phosphate + 4-amino-2-methyl-5-(diphosphooxymethyl)pyrimidine + 2 H(+) = thiamine phosphate + CO2 + diphosphate</text>
        <dbReference type="Rhea" id="RHEA:47844"/>
        <dbReference type="ChEBI" id="CHEBI:15378"/>
        <dbReference type="ChEBI" id="CHEBI:16526"/>
        <dbReference type="ChEBI" id="CHEBI:33019"/>
        <dbReference type="ChEBI" id="CHEBI:37575"/>
        <dbReference type="ChEBI" id="CHEBI:57841"/>
        <dbReference type="ChEBI" id="CHEBI:62899"/>
        <dbReference type="EC" id="2.5.1.3"/>
    </reaction>
</comment>
<comment type="catalytic activity">
    <reaction evidence="1">
        <text>2-(2-carboxy-4-methylthiazol-5-yl)ethyl phosphate + 4-amino-2-methyl-5-(diphosphooxymethyl)pyrimidine + 2 H(+) = thiamine phosphate + CO2 + diphosphate</text>
        <dbReference type="Rhea" id="RHEA:47848"/>
        <dbReference type="ChEBI" id="CHEBI:15378"/>
        <dbReference type="ChEBI" id="CHEBI:16526"/>
        <dbReference type="ChEBI" id="CHEBI:33019"/>
        <dbReference type="ChEBI" id="CHEBI:37575"/>
        <dbReference type="ChEBI" id="CHEBI:57841"/>
        <dbReference type="ChEBI" id="CHEBI:62890"/>
        <dbReference type="EC" id="2.5.1.3"/>
    </reaction>
</comment>
<comment type="catalytic activity">
    <reaction evidence="1">
        <text>4-methyl-5-(2-phosphooxyethyl)-thiazole + 4-amino-2-methyl-5-(diphosphooxymethyl)pyrimidine + H(+) = thiamine phosphate + diphosphate</text>
        <dbReference type="Rhea" id="RHEA:22328"/>
        <dbReference type="ChEBI" id="CHEBI:15378"/>
        <dbReference type="ChEBI" id="CHEBI:33019"/>
        <dbReference type="ChEBI" id="CHEBI:37575"/>
        <dbReference type="ChEBI" id="CHEBI:57841"/>
        <dbReference type="ChEBI" id="CHEBI:58296"/>
        <dbReference type="EC" id="2.5.1.3"/>
    </reaction>
</comment>
<comment type="cofactor">
    <cofactor evidence="1">
        <name>Mg(2+)</name>
        <dbReference type="ChEBI" id="CHEBI:18420"/>
    </cofactor>
    <text evidence="1">Binds 1 Mg(2+) ion per subunit.</text>
</comment>
<comment type="pathway">
    <text evidence="1">Cofactor biosynthesis; thiamine diphosphate biosynthesis; thiamine phosphate from 4-amino-2-methyl-5-diphosphomethylpyrimidine and 4-methyl-5-(2-phosphoethyl)-thiazole: step 1/1.</text>
</comment>
<comment type="similarity">
    <text evidence="1">Belongs to the thiamine-phosphate synthase family.</text>
</comment>
<comment type="sequence caution" evidence="2">
    <conflict type="erroneous initiation">
        <sequence resource="EMBL-CDS" id="ABG15574"/>
    </conflict>
</comment>
<name>THIE_YERPA</name>
<organism>
    <name type="scientific">Yersinia pestis bv. Antiqua (strain Antiqua)</name>
    <dbReference type="NCBI Taxonomy" id="360102"/>
    <lineage>
        <taxon>Bacteria</taxon>
        <taxon>Pseudomonadati</taxon>
        <taxon>Pseudomonadota</taxon>
        <taxon>Gammaproteobacteria</taxon>
        <taxon>Enterobacterales</taxon>
        <taxon>Yersiniaceae</taxon>
        <taxon>Yersinia</taxon>
    </lineage>
</organism>
<accession>Q1C1U8</accession>
<dbReference type="EC" id="2.5.1.3" evidence="1"/>
<dbReference type="EMBL" id="CP000308">
    <property type="protein sequence ID" value="ABG15574.1"/>
    <property type="status" value="ALT_INIT"/>
    <property type="molecule type" value="Genomic_DNA"/>
</dbReference>
<dbReference type="SMR" id="Q1C1U8"/>
<dbReference type="KEGG" id="ypa:YPA_3612"/>
<dbReference type="UniPathway" id="UPA00060">
    <property type="reaction ID" value="UER00141"/>
</dbReference>
<dbReference type="Proteomes" id="UP000001971">
    <property type="component" value="Chromosome"/>
</dbReference>
<dbReference type="GO" id="GO:0005737">
    <property type="term" value="C:cytoplasm"/>
    <property type="evidence" value="ECO:0007669"/>
    <property type="project" value="TreeGrafter"/>
</dbReference>
<dbReference type="GO" id="GO:0000287">
    <property type="term" value="F:magnesium ion binding"/>
    <property type="evidence" value="ECO:0007669"/>
    <property type="project" value="UniProtKB-UniRule"/>
</dbReference>
<dbReference type="GO" id="GO:0004789">
    <property type="term" value="F:thiamine-phosphate diphosphorylase activity"/>
    <property type="evidence" value="ECO:0007669"/>
    <property type="project" value="UniProtKB-UniRule"/>
</dbReference>
<dbReference type="GO" id="GO:0009228">
    <property type="term" value="P:thiamine biosynthetic process"/>
    <property type="evidence" value="ECO:0007669"/>
    <property type="project" value="UniProtKB-KW"/>
</dbReference>
<dbReference type="GO" id="GO:0009229">
    <property type="term" value="P:thiamine diphosphate biosynthetic process"/>
    <property type="evidence" value="ECO:0007669"/>
    <property type="project" value="UniProtKB-UniRule"/>
</dbReference>
<dbReference type="CDD" id="cd00564">
    <property type="entry name" value="TMP_TenI"/>
    <property type="match status" value="1"/>
</dbReference>
<dbReference type="FunFam" id="3.20.20.70:FF:000064">
    <property type="entry name" value="Thiamine-phosphate synthase"/>
    <property type="match status" value="1"/>
</dbReference>
<dbReference type="Gene3D" id="3.20.20.70">
    <property type="entry name" value="Aldolase class I"/>
    <property type="match status" value="1"/>
</dbReference>
<dbReference type="HAMAP" id="MF_00097">
    <property type="entry name" value="TMP_synthase"/>
    <property type="match status" value="1"/>
</dbReference>
<dbReference type="InterPro" id="IPR013785">
    <property type="entry name" value="Aldolase_TIM"/>
</dbReference>
<dbReference type="InterPro" id="IPR036206">
    <property type="entry name" value="ThiamineP_synth_sf"/>
</dbReference>
<dbReference type="InterPro" id="IPR022998">
    <property type="entry name" value="ThiamineP_synth_TenI"/>
</dbReference>
<dbReference type="InterPro" id="IPR034291">
    <property type="entry name" value="TMP_synthase"/>
</dbReference>
<dbReference type="NCBIfam" id="NF002904">
    <property type="entry name" value="PRK03512.1"/>
    <property type="match status" value="1"/>
</dbReference>
<dbReference type="NCBIfam" id="TIGR00693">
    <property type="entry name" value="thiE"/>
    <property type="match status" value="1"/>
</dbReference>
<dbReference type="PANTHER" id="PTHR20857">
    <property type="entry name" value="THIAMINE-PHOSPHATE PYROPHOSPHORYLASE"/>
    <property type="match status" value="1"/>
</dbReference>
<dbReference type="PANTHER" id="PTHR20857:SF15">
    <property type="entry name" value="THIAMINE-PHOSPHATE SYNTHASE"/>
    <property type="match status" value="1"/>
</dbReference>
<dbReference type="Pfam" id="PF02581">
    <property type="entry name" value="TMP-TENI"/>
    <property type="match status" value="1"/>
</dbReference>
<dbReference type="SUPFAM" id="SSF51391">
    <property type="entry name" value="Thiamin phosphate synthase"/>
    <property type="match status" value="1"/>
</dbReference>
<gene>
    <name evidence="1" type="primary">thiE</name>
    <name type="ordered locus">YPA_3612</name>
</gene>
<reference key="1">
    <citation type="journal article" date="2006" name="J. Bacteriol.">
        <title>Complete genome sequence of Yersinia pestis strains Antiqua and Nepal516: evidence of gene reduction in an emerging pathogen.</title>
        <authorList>
            <person name="Chain P.S.G."/>
            <person name="Hu P."/>
            <person name="Malfatti S.A."/>
            <person name="Radnedge L."/>
            <person name="Larimer F."/>
            <person name="Vergez L.M."/>
            <person name="Worsham P."/>
            <person name="Chu M.C."/>
            <person name="Andersen G.L."/>
        </authorList>
    </citation>
    <scope>NUCLEOTIDE SEQUENCE [LARGE SCALE GENOMIC DNA]</scope>
    <source>
        <strain>Antiqua</strain>
    </source>
</reference>
<feature type="chain" id="PRO_0000336431" description="Thiamine-phosphate synthase">
    <location>
        <begin position="1"/>
        <end position="215"/>
    </location>
</feature>
<feature type="binding site" evidence="1">
    <location>
        <begin position="37"/>
        <end position="41"/>
    </location>
    <ligand>
        <name>4-amino-2-methyl-5-(diphosphooxymethyl)pyrimidine</name>
        <dbReference type="ChEBI" id="CHEBI:57841"/>
    </ligand>
</feature>
<feature type="binding site" evidence="1">
    <location>
        <position position="69"/>
    </location>
    <ligand>
        <name>4-amino-2-methyl-5-(diphosphooxymethyl)pyrimidine</name>
        <dbReference type="ChEBI" id="CHEBI:57841"/>
    </ligand>
</feature>
<feature type="binding site" evidence="1">
    <location>
        <position position="70"/>
    </location>
    <ligand>
        <name>Mg(2+)</name>
        <dbReference type="ChEBI" id="CHEBI:18420"/>
    </ligand>
</feature>
<feature type="binding site" evidence="1">
    <location>
        <position position="89"/>
    </location>
    <ligand>
        <name>Mg(2+)</name>
        <dbReference type="ChEBI" id="CHEBI:18420"/>
    </ligand>
</feature>
<feature type="binding site" evidence="1">
    <location>
        <position position="108"/>
    </location>
    <ligand>
        <name>4-amino-2-methyl-5-(diphosphooxymethyl)pyrimidine</name>
        <dbReference type="ChEBI" id="CHEBI:57841"/>
    </ligand>
</feature>
<feature type="binding site" evidence="1">
    <location>
        <begin position="134"/>
        <end position="136"/>
    </location>
    <ligand>
        <name>2-[(2R,5Z)-2-carboxy-4-methylthiazol-5(2H)-ylidene]ethyl phosphate</name>
        <dbReference type="ChEBI" id="CHEBI:62899"/>
    </ligand>
</feature>
<feature type="binding site" evidence="1">
    <location>
        <position position="137"/>
    </location>
    <ligand>
        <name>4-amino-2-methyl-5-(diphosphooxymethyl)pyrimidine</name>
        <dbReference type="ChEBI" id="CHEBI:57841"/>
    </ligand>
</feature>
<feature type="binding site" evidence="1">
    <location>
        <position position="166"/>
    </location>
    <ligand>
        <name>2-[(2R,5Z)-2-carboxy-4-methylthiazol-5(2H)-ylidene]ethyl phosphate</name>
        <dbReference type="ChEBI" id="CHEBI:62899"/>
    </ligand>
</feature>
<feature type="binding site" evidence="1">
    <location>
        <begin position="186"/>
        <end position="187"/>
    </location>
    <ligand>
        <name>2-[(2R,5Z)-2-carboxy-4-methylthiazol-5(2H)-ylidene]ethyl phosphate</name>
        <dbReference type="ChEBI" id="CHEBI:62899"/>
    </ligand>
</feature>